<evidence type="ECO:0000255" key="1"/>
<sequence length="79" mass="8439">MRLIIRAIVLFALVWIGLLMSGYGILVGSKVNAAGLGLQCHYLTARGTSTAQYLHTNSGIIGFSDCPIFRKIATVVDNG</sequence>
<accession>Q8ZNZ8</accession>
<proteinExistence type="inferred from homology"/>
<name>YOBH_SALTY</name>
<gene>
    <name type="primary">yobH</name>
    <name type="ordered locus">STM1841</name>
</gene>
<organism>
    <name type="scientific">Salmonella typhimurium (strain LT2 / SGSC1412 / ATCC 700720)</name>
    <dbReference type="NCBI Taxonomy" id="99287"/>
    <lineage>
        <taxon>Bacteria</taxon>
        <taxon>Pseudomonadati</taxon>
        <taxon>Pseudomonadota</taxon>
        <taxon>Gammaproteobacteria</taxon>
        <taxon>Enterobacterales</taxon>
        <taxon>Enterobacteriaceae</taxon>
        <taxon>Salmonella</taxon>
    </lineage>
</organism>
<keyword id="KW-1185">Reference proteome</keyword>
<keyword id="KW-0732">Signal</keyword>
<dbReference type="EMBL" id="AE006468">
    <property type="protein sequence ID" value="AAL20756.1"/>
    <property type="molecule type" value="Genomic_DNA"/>
</dbReference>
<dbReference type="RefSeq" id="NP_460797.1">
    <property type="nucleotide sequence ID" value="NC_003197.2"/>
</dbReference>
<dbReference type="RefSeq" id="WP_001236777.1">
    <property type="nucleotide sequence ID" value="NC_003197.2"/>
</dbReference>
<dbReference type="SMR" id="Q8ZNZ8"/>
<dbReference type="STRING" id="99287.STM1841"/>
<dbReference type="PaxDb" id="99287-STM1841"/>
<dbReference type="GeneID" id="1253360"/>
<dbReference type="KEGG" id="stm:STM1841"/>
<dbReference type="PATRIC" id="fig|99287.12.peg.1943"/>
<dbReference type="HOGENOM" id="CLU_179882_0_0_6"/>
<dbReference type="OMA" id="WLAMLFT"/>
<dbReference type="PhylomeDB" id="Q8ZNZ8"/>
<dbReference type="BioCyc" id="SENT99287:STM1841-MONOMER"/>
<dbReference type="Proteomes" id="UP000001014">
    <property type="component" value="Chromosome"/>
</dbReference>
<dbReference type="InterPro" id="IPR025611">
    <property type="entry name" value="YobH"/>
</dbReference>
<dbReference type="Pfam" id="PF13996">
    <property type="entry name" value="YobH"/>
    <property type="match status" value="1"/>
</dbReference>
<reference key="1">
    <citation type="journal article" date="2001" name="Nature">
        <title>Complete genome sequence of Salmonella enterica serovar Typhimurium LT2.</title>
        <authorList>
            <person name="McClelland M."/>
            <person name="Sanderson K.E."/>
            <person name="Spieth J."/>
            <person name="Clifton S.W."/>
            <person name="Latreille P."/>
            <person name="Courtney L."/>
            <person name="Porwollik S."/>
            <person name="Ali J."/>
            <person name="Dante M."/>
            <person name="Du F."/>
            <person name="Hou S."/>
            <person name="Layman D."/>
            <person name="Leonard S."/>
            <person name="Nguyen C."/>
            <person name="Scott K."/>
            <person name="Holmes A."/>
            <person name="Grewal N."/>
            <person name="Mulvaney E."/>
            <person name="Ryan E."/>
            <person name="Sun H."/>
            <person name="Florea L."/>
            <person name="Miller W."/>
            <person name="Stoneking T."/>
            <person name="Nhan M."/>
            <person name="Waterston R."/>
            <person name="Wilson R.K."/>
        </authorList>
    </citation>
    <scope>NUCLEOTIDE SEQUENCE [LARGE SCALE GENOMIC DNA]</scope>
    <source>
        <strain>LT2 / SGSC1412 / ATCC 700720</strain>
    </source>
</reference>
<feature type="signal peptide" evidence="1">
    <location>
        <begin position="1"/>
        <end position="33"/>
    </location>
</feature>
<feature type="chain" id="PRO_0000259711" description="Uncharacterized protein YobH">
    <location>
        <begin position="34"/>
        <end position="79"/>
    </location>
</feature>
<protein>
    <recommendedName>
        <fullName>Uncharacterized protein YobH</fullName>
    </recommendedName>
</protein>